<dbReference type="EC" id="6.3.2.8" evidence="1"/>
<dbReference type="EMBL" id="CP001407">
    <property type="protein sequence ID" value="ACO30734.1"/>
    <property type="molecule type" value="Genomic_DNA"/>
</dbReference>
<dbReference type="RefSeq" id="WP_000219465.1">
    <property type="nucleotide sequence ID" value="NZ_CP009318.1"/>
</dbReference>
<dbReference type="SMR" id="C1EV43"/>
<dbReference type="GeneID" id="45024558"/>
<dbReference type="KEGG" id="bcx:BCA_4810"/>
<dbReference type="PATRIC" id="fig|572264.18.peg.4760"/>
<dbReference type="UniPathway" id="UPA00219"/>
<dbReference type="Proteomes" id="UP000002210">
    <property type="component" value="Chromosome"/>
</dbReference>
<dbReference type="GO" id="GO:0005737">
    <property type="term" value="C:cytoplasm"/>
    <property type="evidence" value="ECO:0007669"/>
    <property type="project" value="UniProtKB-SubCell"/>
</dbReference>
<dbReference type="GO" id="GO:0005524">
    <property type="term" value="F:ATP binding"/>
    <property type="evidence" value="ECO:0007669"/>
    <property type="project" value="UniProtKB-UniRule"/>
</dbReference>
<dbReference type="GO" id="GO:0008763">
    <property type="term" value="F:UDP-N-acetylmuramate-L-alanine ligase activity"/>
    <property type="evidence" value="ECO:0007669"/>
    <property type="project" value="UniProtKB-UniRule"/>
</dbReference>
<dbReference type="GO" id="GO:0051301">
    <property type="term" value="P:cell division"/>
    <property type="evidence" value="ECO:0007669"/>
    <property type="project" value="UniProtKB-KW"/>
</dbReference>
<dbReference type="GO" id="GO:0071555">
    <property type="term" value="P:cell wall organization"/>
    <property type="evidence" value="ECO:0007669"/>
    <property type="project" value="UniProtKB-KW"/>
</dbReference>
<dbReference type="GO" id="GO:0009252">
    <property type="term" value="P:peptidoglycan biosynthetic process"/>
    <property type="evidence" value="ECO:0007669"/>
    <property type="project" value="UniProtKB-UniRule"/>
</dbReference>
<dbReference type="GO" id="GO:0008360">
    <property type="term" value="P:regulation of cell shape"/>
    <property type="evidence" value="ECO:0007669"/>
    <property type="project" value="UniProtKB-KW"/>
</dbReference>
<dbReference type="Gene3D" id="3.90.190.20">
    <property type="entry name" value="Mur ligase, C-terminal domain"/>
    <property type="match status" value="1"/>
</dbReference>
<dbReference type="Gene3D" id="3.40.1190.10">
    <property type="entry name" value="Mur-like, catalytic domain"/>
    <property type="match status" value="1"/>
</dbReference>
<dbReference type="Gene3D" id="3.40.50.720">
    <property type="entry name" value="NAD(P)-binding Rossmann-like Domain"/>
    <property type="match status" value="1"/>
</dbReference>
<dbReference type="HAMAP" id="MF_00046">
    <property type="entry name" value="MurC"/>
    <property type="match status" value="1"/>
</dbReference>
<dbReference type="InterPro" id="IPR036565">
    <property type="entry name" value="Mur-like_cat_sf"/>
</dbReference>
<dbReference type="InterPro" id="IPR004101">
    <property type="entry name" value="Mur_ligase_C"/>
</dbReference>
<dbReference type="InterPro" id="IPR036615">
    <property type="entry name" value="Mur_ligase_C_dom_sf"/>
</dbReference>
<dbReference type="InterPro" id="IPR013221">
    <property type="entry name" value="Mur_ligase_cen"/>
</dbReference>
<dbReference type="InterPro" id="IPR000713">
    <property type="entry name" value="Mur_ligase_N"/>
</dbReference>
<dbReference type="InterPro" id="IPR050061">
    <property type="entry name" value="MurCDEF_pg_biosynth"/>
</dbReference>
<dbReference type="InterPro" id="IPR005758">
    <property type="entry name" value="UDP-N-AcMur_Ala_ligase_MurC"/>
</dbReference>
<dbReference type="NCBIfam" id="TIGR01082">
    <property type="entry name" value="murC"/>
    <property type="match status" value="1"/>
</dbReference>
<dbReference type="PANTHER" id="PTHR43445:SF3">
    <property type="entry name" value="UDP-N-ACETYLMURAMATE--L-ALANINE LIGASE"/>
    <property type="match status" value="1"/>
</dbReference>
<dbReference type="PANTHER" id="PTHR43445">
    <property type="entry name" value="UDP-N-ACETYLMURAMATE--L-ALANINE LIGASE-RELATED"/>
    <property type="match status" value="1"/>
</dbReference>
<dbReference type="Pfam" id="PF01225">
    <property type="entry name" value="Mur_ligase"/>
    <property type="match status" value="1"/>
</dbReference>
<dbReference type="Pfam" id="PF02875">
    <property type="entry name" value="Mur_ligase_C"/>
    <property type="match status" value="1"/>
</dbReference>
<dbReference type="Pfam" id="PF08245">
    <property type="entry name" value="Mur_ligase_M"/>
    <property type="match status" value="1"/>
</dbReference>
<dbReference type="SUPFAM" id="SSF51984">
    <property type="entry name" value="MurCD N-terminal domain"/>
    <property type="match status" value="1"/>
</dbReference>
<dbReference type="SUPFAM" id="SSF53623">
    <property type="entry name" value="MurD-like peptide ligases, catalytic domain"/>
    <property type="match status" value="1"/>
</dbReference>
<dbReference type="SUPFAM" id="SSF53244">
    <property type="entry name" value="MurD-like peptide ligases, peptide-binding domain"/>
    <property type="match status" value="1"/>
</dbReference>
<keyword id="KW-0067">ATP-binding</keyword>
<keyword id="KW-0131">Cell cycle</keyword>
<keyword id="KW-0132">Cell division</keyword>
<keyword id="KW-0133">Cell shape</keyword>
<keyword id="KW-0961">Cell wall biogenesis/degradation</keyword>
<keyword id="KW-0963">Cytoplasm</keyword>
<keyword id="KW-0436">Ligase</keyword>
<keyword id="KW-0547">Nucleotide-binding</keyword>
<keyword id="KW-0573">Peptidoglycan synthesis</keyword>
<name>MURC_BACC3</name>
<proteinExistence type="inferred from homology"/>
<evidence type="ECO:0000255" key="1">
    <source>
        <dbReference type="HAMAP-Rule" id="MF_00046"/>
    </source>
</evidence>
<reference key="1">
    <citation type="submission" date="2009-02" db="EMBL/GenBank/DDBJ databases">
        <title>Genome sequence of Bacillus cereus 03BB102.</title>
        <authorList>
            <person name="Dodson R.J."/>
            <person name="Jackson P."/>
            <person name="Munk A.C."/>
            <person name="Brettin T."/>
            <person name="Bruce D."/>
            <person name="Detter C."/>
            <person name="Tapia R."/>
            <person name="Han C."/>
            <person name="Sutton G."/>
            <person name="Sims D."/>
        </authorList>
    </citation>
    <scope>NUCLEOTIDE SEQUENCE [LARGE SCALE GENOMIC DNA]</scope>
    <source>
        <strain>03BB102</strain>
    </source>
</reference>
<feature type="chain" id="PRO_1000117391" description="UDP-N-acetylmuramate--L-alanine ligase">
    <location>
        <begin position="1"/>
        <end position="436"/>
    </location>
</feature>
<feature type="binding site" evidence="1">
    <location>
        <begin position="108"/>
        <end position="114"/>
    </location>
    <ligand>
        <name>ATP</name>
        <dbReference type="ChEBI" id="CHEBI:30616"/>
    </ligand>
</feature>
<accession>C1EV43</accession>
<gene>
    <name evidence="1" type="primary">murC</name>
    <name type="ordered locus">BCA_4810</name>
</gene>
<protein>
    <recommendedName>
        <fullName evidence="1">UDP-N-acetylmuramate--L-alanine ligase</fullName>
        <ecNumber evidence="1">6.3.2.8</ecNumber>
    </recommendedName>
    <alternativeName>
        <fullName evidence="1">UDP-N-acetylmuramoyl-L-alanine synthetase</fullName>
    </alternativeName>
</protein>
<organism>
    <name type="scientific">Bacillus cereus (strain 03BB102)</name>
    <dbReference type="NCBI Taxonomy" id="572264"/>
    <lineage>
        <taxon>Bacteria</taxon>
        <taxon>Bacillati</taxon>
        <taxon>Bacillota</taxon>
        <taxon>Bacilli</taxon>
        <taxon>Bacillales</taxon>
        <taxon>Bacillaceae</taxon>
        <taxon>Bacillus</taxon>
        <taxon>Bacillus cereus group</taxon>
    </lineage>
</organism>
<sequence length="436" mass="49257">MTVYHFVGIKGTGMSSLAQILHDMKHTVQGSDYEKRFFTQTALEKRNISILPFDKSNVKEGQVIIAGNAFPDTHEEIVAAKELNIPVHRYHHFLGDLMNQYTSVAVTGAHGKTSTTGLLAHVMQGAHPTSYLIGDGTGHGVENSKYFVFEACEYRRHFLSYNPDYAIMTNIDFDHPDYFTDINDVFSAFQEMALQVKKGIIACGDDEELQKIQAKVPVIFYGFGEDNDFQARNIQKRTDGTIFDVFVRNTYYDTFKITGYGNHSVLNALAVIALCHYENVDVEAVKHQLTTFEGVKRRFNEKPMGEQVIIDDYAHHPTEINATIEAARQKHPEREIVAVFQPHTFSRTEKFLDEFAESLSKADQVYLCDIFGSARENKGELTIEDLQKRIDGAELITDTTTDVLKKHKNGVLIFMGAGDIQKFEAAYVKEVQVAEK</sequence>
<comment type="function">
    <text evidence="1">Cell wall formation.</text>
</comment>
<comment type="catalytic activity">
    <reaction evidence="1">
        <text>UDP-N-acetyl-alpha-D-muramate + L-alanine + ATP = UDP-N-acetyl-alpha-D-muramoyl-L-alanine + ADP + phosphate + H(+)</text>
        <dbReference type="Rhea" id="RHEA:23372"/>
        <dbReference type="ChEBI" id="CHEBI:15378"/>
        <dbReference type="ChEBI" id="CHEBI:30616"/>
        <dbReference type="ChEBI" id="CHEBI:43474"/>
        <dbReference type="ChEBI" id="CHEBI:57972"/>
        <dbReference type="ChEBI" id="CHEBI:70757"/>
        <dbReference type="ChEBI" id="CHEBI:83898"/>
        <dbReference type="ChEBI" id="CHEBI:456216"/>
        <dbReference type="EC" id="6.3.2.8"/>
    </reaction>
</comment>
<comment type="pathway">
    <text evidence="1">Cell wall biogenesis; peptidoglycan biosynthesis.</text>
</comment>
<comment type="subcellular location">
    <subcellularLocation>
        <location evidence="1">Cytoplasm</location>
    </subcellularLocation>
</comment>
<comment type="similarity">
    <text evidence="1">Belongs to the MurCDEF family.</text>
</comment>